<proteinExistence type="evidence at protein level"/>
<dbReference type="EC" id="1.11.1.14" evidence="1"/>
<dbReference type="PIR" id="S04014">
    <property type="entry name" value="S04014"/>
</dbReference>
<dbReference type="UniPathway" id="UPA00892"/>
<dbReference type="GO" id="GO:0016690">
    <property type="term" value="F:diarylpropane peroxidase activity"/>
    <property type="evidence" value="ECO:0007669"/>
    <property type="project" value="UniProtKB-EC"/>
</dbReference>
<dbReference type="GO" id="GO:0046872">
    <property type="term" value="F:metal ion binding"/>
    <property type="evidence" value="ECO:0007669"/>
    <property type="project" value="UniProtKB-KW"/>
</dbReference>
<dbReference type="GO" id="GO:0042744">
    <property type="term" value="P:hydrogen peroxide catabolic process"/>
    <property type="evidence" value="ECO:0007669"/>
    <property type="project" value="UniProtKB-KW"/>
</dbReference>
<dbReference type="GO" id="GO:0046274">
    <property type="term" value="P:lignin catabolic process"/>
    <property type="evidence" value="ECO:0007669"/>
    <property type="project" value="UniProtKB-UniPathway"/>
</dbReference>
<reference key="1">
    <citation type="journal article" date="1989" name="FEBS Lett.">
        <title>Trametes versicolor ligninase: isozyme sequence homology and substrate specificity.</title>
        <authorList>
            <person name="Joensson L.J."/>
            <person name="Karlsson O."/>
            <person name="Lundquist K."/>
            <person name="Nyman P.O."/>
        </authorList>
    </citation>
    <scope>PROTEIN SEQUENCE</scope>
</reference>
<sequence>VTXPDGVNTATNA</sequence>
<organism>
    <name type="scientific">Trametes versicolor</name>
    <name type="common">White-rot fungus</name>
    <name type="synonym">Coriolus versicolor</name>
    <dbReference type="NCBI Taxonomy" id="5325"/>
    <lineage>
        <taxon>Eukaryota</taxon>
        <taxon>Fungi</taxon>
        <taxon>Dikarya</taxon>
        <taxon>Basidiomycota</taxon>
        <taxon>Agaricomycotina</taxon>
        <taxon>Agaricomycetes</taxon>
        <taxon>Polyporales</taxon>
        <taxon>Polyporaceae</taxon>
        <taxon>Trametes</taxon>
    </lineage>
</organism>
<comment type="function">
    <text evidence="1">Depolymerization of lignin. Catalyzes the C(alpha)-C(beta) cleavage of the propyl side chains of lignin.</text>
</comment>
<comment type="catalytic activity">
    <reaction evidence="1">
        <text>1-(3,4-dimethoxyphenyl)-2-(2-methoxyphenoxy)propane-1,3-diol + H2O2 = 3,4-dimethoxybenzaldehyde + guaiacol + glycolaldehyde + H2O</text>
        <dbReference type="Rhea" id="RHEA:48004"/>
        <dbReference type="ChEBI" id="CHEBI:15377"/>
        <dbReference type="ChEBI" id="CHEBI:16240"/>
        <dbReference type="ChEBI" id="CHEBI:17071"/>
        <dbReference type="ChEBI" id="CHEBI:17098"/>
        <dbReference type="ChEBI" id="CHEBI:28591"/>
        <dbReference type="ChEBI" id="CHEBI:86963"/>
        <dbReference type="EC" id="1.11.1.14"/>
    </reaction>
</comment>
<comment type="catalytic activity">
    <reaction evidence="1">
        <text>2 (3,4-dimethoxyphenyl)methanol + H2O2 = 2 (3,4-dimethoxyphenyl)methanol radical + 2 H2O</text>
        <dbReference type="Rhea" id="RHEA:30271"/>
        <dbReference type="ChEBI" id="CHEBI:15377"/>
        <dbReference type="ChEBI" id="CHEBI:16240"/>
        <dbReference type="ChEBI" id="CHEBI:62150"/>
        <dbReference type="ChEBI" id="CHEBI:88143"/>
        <dbReference type="EC" id="1.11.1.14"/>
    </reaction>
</comment>
<comment type="pathway">
    <text>Secondary metabolite metabolism; lignin degradation.</text>
</comment>
<comment type="similarity">
    <text evidence="2">Belongs to the peroxidase family. Ligninase subfamily.</text>
</comment>
<protein>
    <recommendedName>
        <fullName>Ligninase B</fullName>
        <ecNumber evidence="1">1.11.1.14</ecNumber>
    </recommendedName>
    <alternativeName>
        <fullName>Diarylpropane peroxidase</fullName>
    </alternativeName>
    <alternativeName>
        <fullName>Lignin peroxidase</fullName>
    </alternativeName>
</protein>
<evidence type="ECO:0000250" key="1">
    <source>
        <dbReference type="UniProtKB" id="P31838"/>
    </source>
</evidence>
<evidence type="ECO:0000305" key="2"/>
<keyword id="KW-0903">Direct protein sequencing</keyword>
<keyword id="KW-0349">Heme</keyword>
<keyword id="KW-0376">Hydrogen peroxide</keyword>
<keyword id="KW-0408">Iron</keyword>
<keyword id="KW-0439">Lignin degradation</keyword>
<keyword id="KW-0479">Metal-binding</keyword>
<keyword id="KW-0560">Oxidoreductase</keyword>
<keyword id="KW-0575">Peroxidase</keyword>
<name>LIGB_TRAVE</name>
<accession>P20012</accession>
<feature type="chain" id="PRO_0000055613" description="Ligninase B">
    <location>
        <begin position="1"/>
        <end position="13" status="greater than"/>
    </location>
</feature>
<feature type="non-terminal residue">
    <location>
        <position position="13"/>
    </location>
</feature>